<dbReference type="EMBL" id="X63676">
    <property type="protein sequence ID" value="CAA45215.1"/>
    <property type="molecule type" value="mRNA"/>
</dbReference>
<dbReference type="EMBL" id="X63677">
    <property type="protein sequence ID" value="CAA45216.3"/>
    <property type="molecule type" value="Genomic_DNA"/>
</dbReference>
<dbReference type="EMBL" id="D14121">
    <property type="protein sequence ID" value="BAA03184.1"/>
    <property type="molecule type" value="Genomic_DNA"/>
</dbReference>
<dbReference type="EMBL" id="D14122">
    <property type="protein sequence ID" value="BAA03185.1"/>
    <property type="molecule type" value="Genomic_DNA"/>
</dbReference>
<dbReference type="EMBL" id="D37974">
    <property type="protein sequence ID" value="BAA07192.1"/>
    <property type="molecule type" value="Genomic_DNA"/>
</dbReference>
<dbReference type="EMBL" id="D37973">
    <property type="protein sequence ID" value="BAA07191.1"/>
    <property type="molecule type" value="Genomic_DNA"/>
</dbReference>
<dbReference type="PIR" id="S21169">
    <property type="entry name" value="S21169"/>
</dbReference>
<dbReference type="RefSeq" id="XP_003479427.1">
    <property type="nucleotide sequence ID" value="XM_003479379.4"/>
</dbReference>
<dbReference type="SMR" id="P49112"/>
<dbReference type="FunCoup" id="P49112">
    <property type="interactions" value="24"/>
</dbReference>
<dbReference type="STRING" id="10141.ENSCPOP00000032587"/>
<dbReference type="Ensembl" id="ENSCPOT00000014985.3">
    <property type="protein sequence ID" value="ENSCPOP00000013372.3"/>
    <property type="gene ID" value="ENSCPOG00000014840.4"/>
</dbReference>
<dbReference type="Ensembl" id="ENSCPOT00000042546.1">
    <property type="protein sequence ID" value="ENSCPOP00000032587.1"/>
    <property type="gene ID" value="ENSCPOG00000014840.4"/>
</dbReference>
<dbReference type="GeneID" id="100712792"/>
<dbReference type="KEGG" id="cpoc:100712792"/>
<dbReference type="VEuPathDB" id="HostDB:ENSCPOG00000014840"/>
<dbReference type="HOGENOM" id="CLU_160803_0_0_1"/>
<dbReference type="InParanoid" id="P49112"/>
<dbReference type="OMA" id="DEMPAQK"/>
<dbReference type="OrthoDB" id="9837636at2759"/>
<dbReference type="Proteomes" id="UP000005447">
    <property type="component" value="Unassembled WGS sequence"/>
</dbReference>
<dbReference type="Bgee" id="ENSCPOG00000014840">
    <property type="expression patterns" value="Expressed in liver and 4 other cell types or tissues"/>
</dbReference>
<dbReference type="GO" id="GO:0031012">
    <property type="term" value="C:extracellular matrix"/>
    <property type="evidence" value="ECO:0007669"/>
    <property type="project" value="TreeGrafter"/>
</dbReference>
<dbReference type="GO" id="GO:0005615">
    <property type="term" value="C:extracellular space"/>
    <property type="evidence" value="ECO:0007669"/>
    <property type="project" value="InterPro"/>
</dbReference>
<dbReference type="GO" id="GO:0019731">
    <property type="term" value="P:antibacterial humoral response"/>
    <property type="evidence" value="ECO:0007669"/>
    <property type="project" value="TreeGrafter"/>
</dbReference>
<dbReference type="GO" id="GO:0061844">
    <property type="term" value="P:antimicrobial humoral immune response mediated by antimicrobial peptide"/>
    <property type="evidence" value="ECO:0007669"/>
    <property type="project" value="TreeGrafter"/>
</dbReference>
<dbReference type="GO" id="GO:0071222">
    <property type="term" value="P:cellular response to lipopolysaccharide"/>
    <property type="evidence" value="ECO:0007669"/>
    <property type="project" value="TreeGrafter"/>
</dbReference>
<dbReference type="GO" id="GO:0050832">
    <property type="term" value="P:defense response to fungus"/>
    <property type="evidence" value="ECO:0007669"/>
    <property type="project" value="UniProtKB-KW"/>
</dbReference>
<dbReference type="GO" id="GO:0050829">
    <property type="term" value="P:defense response to Gram-negative bacterium"/>
    <property type="evidence" value="ECO:0007669"/>
    <property type="project" value="TreeGrafter"/>
</dbReference>
<dbReference type="GO" id="GO:0050830">
    <property type="term" value="P:defense response to Gram-positive bacterium"/>
    <property type="evidence" value="ECO:0007669"/>
    <property type="project" value="TreeGrafter"/>
</dbReference>
<dbReference type="GO" id="GO:0051607">
    <property type="term" value="P:defense response to virus"/>
    <property type="evidence" value="ECO:0007669"/>
    <property type="project" value="UniProtKB-KW"/>
</dbReference>
<dbReference type="GO" id="GO:0051673">
    <property type="term" value="P:disruption of plasma membrane integrity in another organism"/>
    <property type="evidence" value="ECO:0007669"/>
    <property type="project" value="TreeGrafter"/>
</dbReference>
<dbReference type="GO" id="GO:0002227">
    <property type="term" value="P:innate immune response in mucosa"/>
    <property type="evidence" value="ECO:0007669"/>
    <property type="project" value="TreeGrafter"/>
</dbReference>
<dbReference type="GO" id="GO:0031640">
    <property type="term" value="P:killing of cells of another organism"/>
    <property type="evidence" value="ECO:0007669"/>
    <property type="project" value="UniProtKB-KW"/>
</dbReference>
<dbReference type="InterPro" id="IPR016327">
    <property type="entry name" value="Alpha-defensin"/>
</dbReference>
<dbReference type="InterPro" id="IPR006081">
    <property type="entry name" value="Alpha-defensin_C"/>
</dbReference>
<dbReference type="InterPro" id="IPR002366">
    <property type="entry name" value="Alpha-defensin_N"/>
</dbReference>
<dbReference type="InterPro" id="IPR006080">
    <property type="entry name" value="Beta/alpha-defensin_C"/>
</dbReference>
<dbReference type="PANTHER" id="PTHR11876">
    <property type="entry name" value="ALPHA-DEFENSIN 1"/>
    <property type="match status" value="1"/>
</dbReference>
<dbReference type="PANTHER" id="PTHR11876:SF28">
    <property type="entry name" value="ALPHA-DEFENSIN 1"/>
    <property type="match status" value="1"/>
</dbReference>
<dbReference type="Pfam" id="PF00323">
    <property type="entry name" value="Defensin_1"/>
    <property type="match status" value="1"/>
</dbReference>
<dbReference type="Pfam" id="PF00879">
    <property type="entry name" value="Defensin_propep"/>
    <property type="match status" value="1"/>
</dbReference>
<dbReference type="PIRSF" id="PIRSF001875">
    <property type="entry name" value="Alpha-defensin"/>
    <property type="match status" value="1"/>
</dbReference>
<dbReference type="SMART" id="SM01418">
    <property type="entry name" value="Defensin_propep"/>
    <property type="match status" value="1"/>
</dbReference>
<dbReference type="SMART" id="SM00048">
    <property type="entry name" value="DEFSN"/>
    <property type="match status" value="1"/>
</dbReference>
<dbReference type="PROSITE" id="PS00269">
    <property type="entry name" value="DEFENSIN"/>
    <property type="match status" value="1"/>
</dbReference>
<sequence length="93" mass="10478">MRTVPLFAACLLLTLMAQAEPLPRAADHSDTKMKGDREDHVAVISFWEEESTSLQDAGAGAGRRCICTTRTCRFPYRRLGTCLFQNRVYTFCC</sequence>
<name>DEF2_CAVPO</name>
<evidence type="ECO:0000250" key="1"/>
<evidence type="ECO:0000255" key="2"/>
<evidence type="ECO:0000305" key="3"/>
<accession>P49112</accession>
<accession>Q9R0Z5</accession>
<keyword id="KW-0044">Antibiotic</keyword>
<keyword id="KW-0929">Antimicrobial</keyword>
<keyword id="KW-0051">Antiviral defense</keyword>
<keyword id="KW-0211">Defensin</keyword>
<keyword id="KW-1015">Disulfide bond</keyword>
<keyword id="KW-0295">Fungicide</keyword>
<keyword id="KW-1185">Reference proteome</keyword>
<keyword id="KW-0964">Secreted</keyword>
<keyword id="KW-0732">Signal</keyword>
<organism>
    <name type="scientific">Cavia porcellus</name>
    <name type="common">Guinea pig</name>
    <dbReference type="NCBI Taxonomy" id="10141"/>
    <lineage>
        <taxon>Eukaryota</taxon>
        <taxon>Metazoa</taxon>
        <taxon>Chordata</taxon>
        <taxon>Craniata</taxon>
        <taxon>Vertebrata</taxon>
        <taxon>Euteleostomi</taxon>
        <taxon>Mammalia</taxon>
        <taxon>Eutheria</taxon>
        <taxon>Euarchontoglires</taxon>
        <taxon>Glires</taxon>
        <taxon>Rodentia</taxon>
        <taxon>Hystricomorpha</taxon>
        <taxon>Caviidae</taxon>
        <taxon>Cavia</taxon>
    </lineage>
</organism>
<feature type="signal peptide" evidence="2">
    <location>
        <begin position="1"/>
        <end position="19"/>
    </location>
</feature>
<feature type="propeptide" id="PRO_0000006769">
    <location>
        <begin position="20"/>
        <end position="62"/>
    </location>
</feature>
<feature type="peptide" id="PRO_0000006770" description="Neutrophil cationic peptide 2">
    <location>
        <begin position="63"/>
        <end position="93"/>
    </location>
</feature>
<feature type="disulfide bond" evidence="1">
    <location>
        <begin position="65"/>
        <end position="93"/>
    </location>
</feature>
<feature type="disulfide bond" evidence="1">
    <location>
        <begin position="67"/>
        <end position="82"/>
    </location>
</feature>
<feature type="disulfide bond" evidence="1">
    <location>
        <begin position="72"/>
        <end position="92"/>
    </location>
</feature>
<proteinExistence type="inferred from homology"/>
<comment type="function">
    <text>Has antibiotic, anti-fungi and antiviral activity.</text>
</comment>
<comment type="subcellular location">
    <subcellularLocation>
        <location>Secreted</location>
    </subcellularLocation>
</comment>
<comment type="similarity">
    <text evidence="3">Belongs to the alpha-defensin family.</text>
</comment>
<reference key="1">
    <citation type="journal article" date="1991" name="FEBS Lett.">
        <title>Characterization of cDNA clones encoding guinea pig neutrophil cationic peptides.</title>
        <authorList>
            <person name="Nagaoka I."/>
            <person name="Someya A."/>
            <person name="Iwabuchi K."/>
            <person name="Yamashita T."/>
        </authorList>
    </citation>
    <scope>NUCLEOTIDE SEQUENCE</scope>
    <source>
        <strain>Hartley</strain>
        <tissue>Bone marrow</tissue>
    </source>
</reference>
<reference key="2">
    <citation type="journal article" date="1992" name="FEBS Lett.">
        <title>Structure of the guinea pig neutrophil cationic peptide gene.</title>
        <authorList>
            <person name="Nagaoka I."/>
            <person name="Someya A."/>
            <person name="Iwabuchi K."/>
            <person name="Yamashita T."/>
        </authorList>
    </citation>
    <scope>NUCLEOTIDE SEQUENCE [GENOMIC DNA]</scope>
    <source>
        <strain>Hartley</strain>
        <tissue>Liver</tissue>
    </source>
</reference>
<reference key="3">
    <citation type="journal article" date="1993" name="DNA Seq.">
        <title>Cloning and characterization of the guinea pig neutrophil cationic peptide-1 and -2 genes.</title>
        <authorList>
            <person name="Nagaoka I."/>
            <person name="Nonoguchi A."/>
            <person name="Yamashita T."/>
        </authorList>
    </citation>
    <scope>NUCLEOTIDE SEQUENCE [GENOMIC DNA]</scope>
    <source>
        <strain>Hartley</strain>
        <tissue>Liver</tissue>
    </source>
</reference>
<protein>
    <recommendedName>
        <fullName>Neutrophil cationic peptide 2</fullName>
        <shortName>CP-2</shortName>
    </recommendedName>
    <alternativeName>
        <fullName>GNCP-2</fullName>
    </alternativeName>
</protein>